<evidence type="ECO:0000255" key="1">
    <source>
        <dbReference type="HAMAP-Rule" id="MF_00286"/>
    </source>
</evidence>
<name>DSBB_HAHCH</name>
<comment type="function">
    <text evidence="1">Required for disulfide bond formation in some periplasmic proteins. Acts by oxidizing the DsbA protein.</text>
</comment>
<comment type="subcellular location">
    <subcellularLocation>
        <location evidence="1">Cell inner membrane</location>
        <topology evidence="1">Multi-pass membrane protein</topology>
    </subcellularLocation>
</comment>
<comment type="similarity">
    <text evidence="1">Belongs to the DsbB family.</text>
</comment>
<gene>
    <name evidence="1" type="primary">dsbB</name>
    <name type="ordered locus">HCH_06418</name>
</gene>
<reference key="1">
    <citation type="journal article" date="2005" name="Nucleic Acids Res.">
        <title>Genomic blueprint of Hahella chejuensis, a marine microbe producing an algicidal agent.</title>
        <authorList>
            <person name="Jeong H."/>
            <person name="Yim J.H."/>
            <person name="Lee C."/>
            <person name="Choi S.-H."/>
            <person name="Park Y.K."/>
            <person name="Yoon S.H."/>
            <person name="Hur C.-G."/>
            <person name="Kang H.-Y."/>
            <person name="Kim D."/>
            <person name="Lee H.H."/>
            <person name="Park K.H."/>
            <person name="Park S.-H."/>
            <person name="Park H.-S."/>
            <person name="Lee H.K."/>
            <person name="Oh T.K."/>
            <person name="Kim J.F."/>
        </authorList>
    </citation>
    <scope>NUCLEOTIDE SEQUENCE [LARGE SCALE GENOMIC DNA]</scope>
    <source>
        <strain>KCTC 2396</strain>
    </source>
</reference>
<keyword id="KW-0997">Cell inner membrane</keyword>
<keyword id="KW-1003">Cell membrane</keyword>
<keyword id="KW-0143">Chaperone</keyword>
<keyword id="KW-1015">Disulfide bond</keyword>
<keyword id="KW-0249">Electron transport</keyword>
<keyword id="KW-0472">Membrane</keyword>
<keyword id="KW-0560">Oxidoreductase</keyword>
<keyword id="KW-0676">Redox-active center</keyword>
<keyword id="KW-1185">Reference proteome</keyword>
<keyword id="KW-0812">Transmembrane</keyword>
<keyword id="KW-1133">Transmembrane helix</keyword>
<keyword id="KW-0813">Transport</keyword>
<proteinExistence type="inferred from homology"/>
<accession>Q2S8G1</accession>
<protein>
    <recommendedName>
        <fullName evidence="1">Disulfide bond formation protein B</fullName>
    </recommendedName>
    <alternativeName>
        <fullName evidence="1">Disulfide oxidoreductase</fullName>
    </alternativeName>
</protein>
<feature type="chain" id="PRO_0000298362" description="Disulfide bond formation protein B">
    <location>
        <begin position="1"/>
        <end position="165"/>
    </location>
</feature>
<feature type="topological domain" description="Cytoplasmic" evidence="1">
    <location>
        <begin position="1"/>
        <end position="10"/>
    </location>
</feature>
<feature type="transmembrane region" description="Helical" evidence="1">
    <location>
        <begin position="11"/>
        <end position="27"/>
    </location>
</feature>
<feature type="topological domain" description="Periplasmic" evidence="1">
    <location>
        <begin position="28"/>
        <end position="45"/>
    </location>
</feature>
<feature type="transmembrane region" description="Helical" evidence="1">
    <location>
        <begin position="46"/>
        <end position="62"/>
    </location>
</feature>
<feature type="topological domain" description="Cytoplasmic" evidence="1">
    <location>
        <begin position="63"/>
        <end position="68"/>
    </location>
</feature>
<feature type="transmembrane region" description="Helical" evidence="1">
    <location>
        <begin position="69"/>
        <end position="86"/>
    </location>
</feature>
<feature type="topological domain" description="Periplasmic" evidence="1">
    <location>
        <begin position="87"/>
        <end position="143"/>
    </location>
</feature>
<feature type="transmembrane region" description="Helical" evidence="1">
    <location>
        <begin position="144"/>
        <end position="162"/>
    </location>
</feature>
<feature type="topological domain" description="Cytoplasmic" evidence="1">
    <location>
        <begin position="163"/>
        <end position="165"/>
    </location>
</feature>
<feature type="disulfide bond" description="Redox-active" evidence="1">
    <location>
        <begin position="37"/>
        <end position="40"/>
    </location>
</feature>
<feature type="disulfide bond" description="Redox-active" evidence="1">
    <location>
        <begin position="102"/>
        <end position="129"/>
    </location>
</feature>
<sequence>MPAWLTNRTIYFLCFLAIAGLMGFAFYLQYVKDLEPCPLCMAQRIAFVLAGLVFLAAALHNPKNTGTTVYAFLGWVTTLGGAALATRQLWLQSLPADQVPACGPGLEYMLEAFPFSEVLTMMLTGTGECAEVQWTFLGLSIPGWTLVAFIGFTAVWAFAWVRRPR</sequence>
<organism>
    <name type="scientific">Hahella chejuensis (strain KCTC 2396)</name>
    <dbReference type="NCBI Taxonomy" id="349521"/>
    <lineage>
        <taxon>Bacteria</taxon>
        <taxon>Pseudomonadati</taxon>
        <taxon>Pseudomonadota</taxon>
        <taxon>Gammaproteobacteria</taxon>
        <taxon>Oceanospirillales</taxon>
        <taxon>Hahellaceae</taxon>
        <taxon>Hahella</taxon>
    </lineage>
</organism>
<dbReference type="EMBL" id="CP000155">
    <property type="protein sequence ID" value="ABC33063.1"/>
    <property type="molecule type" value="Genomic_DNA"/>
</dbReference>
<dbReference type="RefSeq" id="WP_011400115.1">
    <property type="nucleotide sequence ID" value="NC_007645.1"/>
</dbReference>
<dbReference type="SMR" id="Q2S8G1"/>
<dbReference type="STRING" id="349521.HCH_06418"/>
<dbReference type="KEGG" id="hch:HCH_06418"/>
<dbReference type="eggNOG" id="COG1495">
    <property type="taxonomic scope" value="Bacteria"/>
</dbReference>
<dbReference type="HOGENOM" id="CLU_098660_1_1_6"/>
<dbReference type="OrthoDB" id="3711263at2"/>
<dbReference type="Proteomes" id="UP000000238">
    <property type="component" value="Chromosome"/>
</dbReference>
<dbReference type="GO" id="GO:0005886">
    <property type="term" value="C:plasma membrane"/>
    <property type="evidence" value="ECO:0007669"/>
    <property type="project" value="UniProtKB-SubCell"/>
</dbReference>
<dbReference type="GO" id="GO:0009055">
    <property type="term" value="F:electron transfer activity"/>
    <property type="evidence" value="ECO:0007669"/>
    <property type="project" value="UniProtKB-UniRule"/>
</dbReference>
<dbReference type="GO" id="GO:0015035">
    <property type="term" value="F:protein-disulfide reductase activity"/>
    <property type="evidence" value="ECO:0007669"/>
    <property type="project" value="UniProtKB-UniRule"/>
</dbReference>
<dbReference type="GO" id="GO:0006457">
    <property type="term" value="P:protein folding"/>
    <property type="evidence" value="ECO:0007669"/>
    <property type="project" value="InterPro"/>
</dbReference>
<dbReference type="Gene3D" id="1.20.1550.10">
    <property type="entry name" value="DsbB-like"/>
    <property type="match status" value="1"/>
</dbReference>
<dbReference type="HAMAP" id="MF_00286">
    <property type="entry name" value="DsbB"/>
    <property type="match status" value="1"/>
</dbReference>
<dbReference type="InterPro" id="IPR003752">
    <property type="entry name" value="DiS_bond_form_DsbB/BdbC"/>
</dbReference>
<dbReference type="InterPro" id="IPR022920">
    <property type="entry name" value="Disulphide_bond_form_DsbB"/>
</dbReference>
<dbReference type="InterPro" id="IPR050183">
    <property type="entry name" value="DsbB"/>
</dbReference>
<dbReference type="InterPro" id="IPR023380">
    <property type="entry name" value="DsbB-like_sf"/>
</dbReference>
<dbReference type="PANTHER" id="PTHR36570">
    <property type="entry name" value="DISULFIDE BOND FORMATION PROTEIN B"/>
    <property type="match status" value="1"/>
</dbReference>
<dbReference type="PANTHER" id="PTHR36570:SF3">
    <property type="entry name" value="DISULFIDE BOND FORMATION PROTEIN B"/>
    <property type="match status" value="1"/>
</dbReference>
<dbReference type="Pfam" id="PF02600">
    <property type="entry name" value="DsbB"/>
    <property type="match status" value="1"/>
</dbReference>
<dbReference type="SUPFAM" id="SSF158442">
    <property type="entry name" value="DsbB-like"/>
    <property type="match status" value="1"/>
</dbReference>